<evidence type="ECO:0000255" key="1">
    <source>
        <dbReference type="HAMAP-Rule" id="MF_00374"/>
    </source>
</evidence>
<evidence type="ECO:0000305" key="2"/>
<proteinExistence type="inferred from homology"/>
<keyword id="KW-0687">Ribonucleoprotein</keyword>
<keyword id="KW-0689">Ribosomal protein</keyword>
<protein>
    <recommendedName>
        <fullName evidence="1">Large ribosomal subunit protein uL29</fullName>
    </recommendedName>
    <alternativeName>
        <fullName evidence="2">50S ribosomal protein L29</fullName>
    </alternativeName>
</protein>
<reference key="1">
    <citation type="journal article" date="2005" name="Nucleic Acids Res.">
        <title>Genome dynamics and diversity of Shigella species, the etiologic agents of bacillary dysentery.</title>
        <authorList>
            <person name="Yang F."/>
            <person name="Yang J."/>
            <person name="Zhang X."/>
            <person name="Chen L."/>
            <person name="Jiang Y."/>
            <person name="Yan Y."/>
            <person name="Tang X."/>
            <person name="Wang J."/>
            <person name="Xiong Z."/>
            <person name="Dong J."/>
            <person name="Xue Y."/>
            <person name="Zhu Y."/>
            <person name="Xu X."/>
            <person name="Sun L."/>
            <person name="Chen S."/>
            <person name="Nie H."/>
            <person name="Peng J."/>
            <person name="Xu J."/>
            <person name="Wang Y."/>
            <person name="Yuan Z."/>
            <person name="Wen Y."/>
            <person name="Yao Z."/>
            <person name="Shen Y."/>
            <person name="Qiang B."/>
            <person name="Hou Y."/>
            <person name="Yu J."/>
            <person name="Jin Q."/>
        </authorList>
    </citation>
    <scope>NUCLEOTIDE SEQUENCE [LARGE SCALE GENOMIC DNA]</scope>
    <source>
        <strain>Sb227</strain>
    </source>
</reference>
<sequence length="63" mass="7273">MKAKELREKSVEELNTELLNLLREQFNLRMQAASGQLQQSHLLKQVRRDVARVKTLLNEKAGA</sequence>
<dbReference type="EMBL" id="CP000036">
    <property type="protein sequence ID" value="ABB67794.1"/>
    <property type="molecule type" value="Genomic_DNA"/>
</dbReference>
<dbReference type="RefSeq" id="WP_000644741.1">
    <property type="nucleotide sequence ID" value="NC_007613.1"/>
</dbReference>
<dbReference type="SMR" id="Q31VW4"/>
<dbReference type="GeneID" id="93778675"/>
<dbReference type="KEGG" id="sbo:SBO_3306"/>
<dbReference type="HOGENOM" id="CLU_158491_1_2_6"/>
<dbReference type="Proteomes" id="UP000007067">
    <property type="component" value="Chromosome"/>
</dbReference>
<dbReference type="GO" id="GO:0022625">
    <property type="term" value="C:cytosolic large ribosomal subunit"/>
    <property type="evidence" value="ECO:0007669"/>
    <property type="project" value="TreeGrafter"/>
</dbReference>
<dbReference type="GO" id="GO:0003735">
    <property type="term" value="F:structural constituent of ribosome"/>
    <property type="evidence" value="ECO:0007669"/>
    <property type="project" value="InterPro"/>
</dbReference>
<dbReference type="GO" id="GO:0006412">
    <property type="term" value="P:translation"/>
    <property type="evidence" value="ECO:0007669"/>
    <property type="project" value="UniProtKB-UniRule"/>
</dbReference>
<dbReference type="CDD" id="cd00427">
    <property type="entry name" value="Ribosomal_L29_HIP"/>
    <property type="match status" value="1"/>
</dbReference>
<dbReference type="Gene3D" id="6.10.140.1970">
    <property type="match status" value="1"/>
</dbReference>
<dbReference type="HAMAP" id="MF_00374">
    <property type="entry name" value="Ribosomal_uL29"/>
    <property type="match status" value="1"/>
</dbReference>
<dbReference type="InterPro" id="IPR050063">
    <property type="entry name" value="Ribosomal_protein_uL29"/>
</dbReference>
<dbReference type="InterPro" id="IPR001854">
    <property type="entry name" value="Ribosomal_uL29"/>
</dbReference>
<dbReference type="InterPro" id="IPR018254">
    <property type="entry name" value="Ribosomal_uL29_CS"/>
</dbReference>
<dbReference type="InterPro" id="IPR036049">
    <property type="entry name" value="Ribosomal_uL29_sf"/>
</dbReference>
<dbReference type="NCBIfam" id="TIGR00012">
    <property type="entry name" value="L29"/>
    <property type="match status" value="1"/>
</dbReference>
<dbReference type="PANTHER" id="PTHR10916">
    <property type="entry name" value="60S RIBOSOMAL PROTEIN L35/50S RIBOSOMAL PROTEIN L29"/>
    <property type="match status" value="1"/>
</dbReference>
<dbReference type="PANTHER" id="PTHR10916:SF0">
    <property type="entry name" value="LARGE RIBOSOMAL SUBUNIT PROTEIN UL29C"/>
    <property type="match status" value="1"/>
</dbReference>
<dbReference type="Pfam" id="PF00831">
    <property type="entry name" value="Ribosomal_L29"/>
    <property type="match status" value="1"/>
</dbReference>
<dbReference type="SUPFAM" id="SSF46561">
    <property type="entry name" value="Ribosomal protein L29 (L29p)"/>
    <property type="match status" value="1"/>
</dbReference>
<dbReference type="PROSITE" id="PS00579">
    <property type="entry name" value="RIBOSOMAL_L29"/>
    <property type="match status" value="1"/>
</dbReference>
<comment type="similarity">
    <text evidence="1">Belongs to the universal ribosomal protein uL29 family.</text>
</comment>
<accession>Q31VW4</accession>
<gene>
    <name evidence="1" type="primary">rpmC</name>
    <name type="ordered locus">SBO_3306</name>
</gene>
<organism>
    <name type="scientific">Shigella boydii serotype 4 (strain Sb227)</name>
    <dbReference type="NCBI Taxonomy" id="300268"/>
    <lineage>
        <taxon>Bacteria</taxon>
        <taxon>Pseudomonadati</taxon>
        <taxon>Pseudomonadota</taxon>
        <taxon>Gammaproteobacteria</taxon>
        <taxon>Enterobacterales</taxon>
        <taxon>Enterobacteriaceae</taxon>
        <taxon>Shigella</taxon>
    </lineage>
</organism>
<feature type="chain" id="PRO_1000007606" description="Large ribosomal subunit protein uL29">
    <location>
        <begin position="1"/>
        <end position="63"/>
    </location>
</feature>
<name>RL29_SHIBS</name>